<gene>
    <name evidence="1" type="primary">maeA</name>
    <name type="ordered locus">IL0598</name>
</gene>
<sequence length="562" mass="62784">MPQTQRPLYIPYSGPNLLETPLLNKGSAFSKEERAAFNLTGLLPPRYESIEEQAERAYMQYRSFETPINKHIYLRAIQDNNETLFYRLLTDHLEEMMPIIYTPTVGDACEKFSDIYRSSRGLFISYSERDQIDDILRNATKQKVKVIVVTDGERILGLGDQGIGGMGIPIGKLSLYTACGGISPAYTLPVMLDVGTNNEKLLEDPMYMGARHKRIEQDEYDEFLDKFIKAVTRRWPGVMLQFEDFAQPNAMPLLRRYRDEVCCFNDDIQGTASVTVGTLLAACRQKGKKLSEQKVVFVGAGSAGCGIAEQIMIQMTAEGLTEEQAKRQIFMVDRFGLVMDTMDGLRDFQQALAQKTSDLNAWEYSGEYPSLLDVMHCAEPDILIGVSGQAGLFTEQVISTMAKNVERPIIFPLSNPSKHVEAHPADVLKWSEGKAIVATGSPFGEVEYDGRIYPIAQCNNSYIFPGIGLGVLSVKSERVSDEMLRVASKTLANASPSANGKGEALLPAFNDLTQLSKDIAFAVGKVAQQEGLALEIDDDTLRERIDNNFWKPEYRFYKRVSI</sequence>
<accession>Q5QWY8</accession>
<dbReference type="EC" id="1.1.1.38" evidence="1"/>
<dbReference type="EMBL" id="AE017340">
    <property type="protein sequence ID" value="AAV81439.1"/>
    <property type="molecule type" value="Genomic_DNA"/>
</dbReference>
<dbReference type="RefSeq" id="WP_011233854.1">
    <property type="nucleotide sequence ID" value="NC_006512.1"/>
</dbReference>
<dbReference type="SMR" id="Q5QWY8"/>
<dbReference type="STRING" id="283942.IL0598"/>
<dbReference type="GeneID" id="41335749"/>
<dbReference type="KEGG" id="ilo:IL0598"/>
<dbReference type="eggNOG" id="COG0281">
    <property type="taxonomic scope" value="Bacteria"/>
</dbReference>
<dbReference type="HOGENOM" id="CLU_011405_5_2_6"/>
<dbReference type="OrthoDB" id="3314528at2"/>
<dbReference type="Proteomes" id="UP000001171">
    <property type="component" value="Chromosome"/>
</dbReference>
<dbReference type="GO" id="GO:0005829">
    <property type="term" value="C:cytosol"/>
    <property type="evidence" value="ECO:0007669"/>
    <property type="project" value="TreeGrafter"/>
</dbReference>
<dbReference type="GO" id="GO:0004471">
    <property type="term" value="F:malate dehydrogenase (decarboxylating) (NAD+) activity"/>
    <property type="evidence" value="ECO:0007669"/>
    <property type="project" value="UniProtKB-UniRule"/>
</dbReference>
<dbReference type="GO" id="GO:0046872">
    <property type="term" value="F:metal ion binding"/>
    <property type="evidence" value="ECO:0007669"/>
    <property type="project" value="UniProtKB-KW"/>
</dbReference>
<dbReference type="GO" id="GO:0051287">
    <property type="term" value="F:NAD binding"/>
    <property type="evidence" value="ECO:0007669"/>
    <property type="project" value="InterPro"/>
</dbReference>
<dbReference type="GO" id="GO:0008948">
    <property type="term" value="F:oxaloacetate decarboxylase activity"/>
    <property type="evidence" value="ECO:0007669"/>
    <property type="project" value="UniProtKB-UniRule"/>
</dbReference>
<dbReference type="GO" id="GO:0006108">
    <property type="term" value="P:malate metabolic process"/>
    <property type="evidence" value="ECO:0007669"/>
    <property type="project" value="TreeGrafter"/>
</dbReference>
<dbReference type="CDD" id="cd05312">
    <property type="entry name" value="NAD_bind_1_malic_enz"/>
    <property type="match status" value="1"/>
</dbReference>
<dbReference type="FunFam" id="3.40.50.10380:FF:000001">
    <property type="entry name" value="NAD-dependent malic enzyme"/>
    <property type="match status" value="1"/>
</dbReference>
<dbReference type="FunFam" id="3.40.50.720:FF:000055">
    <property type="entry name" value="NAD-dependent malic enzyme"/>
    <property type="match status" value="1"/>
</dbReference>
<dbReference type="Gene3D" id="3.40.50.10380">
    <property type="entry name" value="Malic enzyme, N-terminal domain"/>
    <property type="match status" value="1"/>
</dbReference>
<dbReference type="Gene3D" id="3.40.50.720">
    <property type="entry name" value="NAD(P)-binding Rossmann-like Domain"/>
    <property type="match status" value="1"/>
</dbReference>
<dbReference type="HAMAP" id="MF_01619">
    <property type="entry name" value="NAD_malic_enz"/>
    <property type="match status" value="1"/>
</dbReference>
<dbReference type="InterPro" id="IPR046346">
    <property type="entry name" value="Aminoacid_DH-like_N_sf"/>
</dbReference>
<dbReference type="InterPro" id="IPR015884">
    <property type="entry name" value="Malic_enzyme_CS"/>
</dbReference>
<dbReference type="InterPro" id="IPR012301">
    <property type="entry name" value="Malic_N_dom"/>
</dbReference>
<dbReference type="InterPro" id="IPR037062">
    <property type="entry name" value="Malic_N_dom_sf"/>
</dbReference>
<dbReference type="InterPro" id="IPR012302">
    <property type="entry name" value="Malic_NAD-bd"/>
</dbReference>
<dbReference type="InterPro" id="IPR001891">
    <property type="entry name" value="Malic_OxRdtase"/>
</dbReference>
<dbReference type="InterPro" id="IPR036291">
    <property type="entry name" value="NAD(P)-bd_dom_sf"/>
</dbReference>
<dbReference type="InterPro" id="IPR023667">
    <property type="entry name" value="NAD_malic_enz_proteobac"/>
</dbReference>
<dbReference type="NCBIfam" id="NF010052">
    <property type="entry name" value="PRK13529.1"/>
    <property type="match status" value="1"/>
</dbReference>
<dbReference type="PANTHER" id="PTHR23406">
    <property type="entry name" value="MALIC ENZYME-RELATED"/>
    <property type="match status" value="1"/>
</dbReference>
<dbReference type="PANTHER" id="PTHR23406:SF34">
    <property type="entry name" value="NAD-DEPENDENT MALIC ENZYME, MITOCHONDRIAL"/>
    <property type="match status" value="1"/>
</dbReference>
<dbReference type="Pfam" id="PF00390">
    <property type="entry name" value="malic"/>
    <property type="match status" value="1"/>
</dbReference>
<dbReference type="Pfam" id="PF03949">
    <property type="entry name" value="Malic_M"/>
    <property type="match status" value="1"/>
</dbReference>
<dbReference type="PIRSF" id="PIRSF000106">
    <property type="entry name" value="ME"/>
    <property type="match status" value="1"/>
</dbReference>
<dbReference type="PRINTS" id="PR00072">
    <property type="entry name" value="MALOXRDTASE"/>
</dbReference>
<dbReference type="SMART" id="SM01274">
    <property type="entry name" value="malic"/>
    <property type="match status" value="1"/>
</dbReference>
<dbReference type="SMART" id="SM00919">
    <property type="entry name" value="Malic_M"/>
    <property type="match status" value="1"/>
</dbReference>
<dbReference type="SUPFAM" id="SSF53223">
    <property type="entry name" value="Aminoacid dehydrogenase-like, N-terminal domain"/>
    <property type="match status" value="1"/>
</dbReference>
<dbReference type="SUPFAM" id="SSF51735">
    <property type="entry name" value="NAD(P)-binding Rossmann-fold domains"/>
    <property type="match status" value="1"/>
</dbReference>
<dbReference type="PROSITE" id="PS00331">
    <property type="entry name" value="MALIC_ENZYMES"/>
    <property type="match status" value="1"/>
</dbReference>
<reference key="1">
    <citation type="journal article" date="2004" name="Proc. Natl. Acad. Sci. U.S.A.">
        <title>Genome sequence of the deep-sea gamma-proteobacterium Idiomarina loihiensis reveals amino acid fermentation as a source of carbon and energy.</title>
        <authorList>
            <person name="Hou S."/>
            <person name="Saw J.H."/>
            <person name="Lee K.S."/>
            <person name="Freitas T.A."/>
            <person name="Belisle C."/>
            <person name="Kawarabayasi Y."/>
            <person name="Donachie S.P."/>
            <person name="Pikina A."/>
            <person name="Galperin M.Y."/>
            <person name="Koonin E.V."/>
            <person name="Makarova K.S."/>
            <person name="Omelchenko M.V."/>
            <person name="Sorokin A."/>
            <person name="Wolf Y.I."/>
            <person name="Li Q.X."/>
            <person name="Keum Y.S."/>
            <person name="Campbell S."/>
            <person name="Denery J."/>
            <person name="Aizawa S."/>
            <person name="Shibata S."/>
            <person name="Malahoff A."/>
            <person name="Alam M."/>
        </authorList>
    </citation>
    <scope>NUCLEOTIDE SEQUENCE [LARGE SCALE GENOMIC DNA]</scope>
    <source>
        <strain>ATCC BAA-735 / DSM 15497 / L2-TR</strain>
    </source>
</reference>
<keyword id="KW-0479">Metal-binding</keyword>
<keyword id="KW-0520">NAD</keyword>
<keyword id="KW-0560">Oxidoreductase</keyword>
<keyword id="KW-1185">Reference proteome</keyword>
<protein>
    <recommendedName>
        <fullName evidence="1">NAD-dependent malic enzyme</fullName>
        <shortName evidence="1">NAD-ME</shortName>
        <ecNumber evidence="1">1.1.1.38</ecNumber>
    </recommendedName>
</protein>
<feature type="chain" id="PRO_0000160219" description="NAD-dependent malic enzyme">
    <location>
        <begin position="1"/>
        <end position="562"/>
    </location>
</feature>
<feature type="active site" description="Proton donor" evidence="1">
    <location>
        <position position="101"/>
    </location>
</feature>
<feature type="active site" description="Proton acceptor" evidence="1">
    <location>
        <position position="172"/>
    </location>
</feature>
<feature type="binding site" evidence="1">
    <location>
        <position position="154"/>
    </location>
    <ligand>
        <name>NAD(+)</name>
        <dbReference type="ChEBI" id="CHEBI:57540"/>
    </ligand>
</feature>
<feature type="binding site" evidence="1">
    <location>
        <position position="243"/>
    </location>
    <ligand>
        <name>a divalent metal cation</name>
        <dbReference type="ChEBI" id="CHEBI:60240"/>
    </ligand>
</feature>
<feature type="binding site" evidence="1">
    <location>
        <position position="244"/>
    </location>
    <ligand>
        <name>a divalent metal cation</name>
        <dbReference type="ChEBI" id="CHEBI:60240"/>
    </ligand>
</feature>
<feature type="binding site" evidence="1">
    <location>
        <position position="267"/>
    </location>
    <ligand>
        <name>a divalent metal cation</name>
        <dbReference type="ChEBI" id="CHEBI:60240"/>
    </ligand>
</feature>
<feature type="binding site" evidence="1">
    <location>
        <position position="267"/>
    </location>
    <ligand>
        <name>NAD(+)</name>
        <dbReference type="ChEBI" id="CHEBI:57540"/>
    </ligand>
</feature>
<feature type="binding site" evidence="1">
    <location>
        <position position="415"/>
    </location>
    <ligand>
        <name>NAD(+)</name>
        <dbReference type="ChEBI" id="CHEBI:57540"/>
    </ligand>
</feature>
<feature type="site" description="Important for activity" evidence="1">
    <location>
        <position position="267"/>
    </location>
</feature>
<organism>
    <name type="scientific">Idiomarina loihiensis (strain ATCC BAA-735 / DSM 15497 / L2-TR)</name>
    <dbReference type="NCBI Taxonomy" id="283942"/>
    <lineage>
        <taxon>Bacteria</taxon>
        <taxon>Pseudomonadati</taxon>
        <taxon>Pseudomonadota</taxon>
        <taxon>Gammaproteobacteria</taxon>
        <taxon>Alteromonadales</taxon>
        <taxon>Idiomarinaceae</taxon>
        <taxon>Idiomarina</taxon>
    </lineage>
</organism>
<evidence type="ECO:0000255" key="1">
    <source>
        <dbReference type="HAMAP-Rule" id="MF_01619"/>
    </source>
</evidence>
<name>MAO1_IDILO</name>
<proteinExistence type="inferred from homology"/>
<comment type="catalytic activity">
    <reaction evidence="1">
        <text>(S)-malate + NAD(+) = pyruvate + CO2 + NADH</text>
        <dbReference type="Rhea" id="RHEA:12653"/>
        <dbReference type="ChEBI" id="CHEBI:15361"/>
        <dbReference type="ChEBI" id="CHEBI:15589"/>
        <dbReference type="ChEBI" id="CHEBI:16526"/>
        <dbReference type="ChEBI" id="CHEBI:57540"/>
        <dbReference type="ChEBI" id="CHEBI:57945"/>
        <dbReference type="EC" id="1.1.1.38"/>
    </reaction>
</comment>
<comment type="catalytic activity">
    <reaction evidence="1">
        <text>oxaloacetate + H(+) = pyruvate + CO2</text>
        <dbReference type="Rhea" id="RHEA:15641"/>
        <dbReference type="ChEBI" id="CHEBI:15361"/>
        <dbReference type="ChEBI" id="CHEBI:15378"/>
        <dbReference type="ChEBI" id="CHEBI:16452"/>
        <dbReference type="ChEBI" id="CHEBI:16526"/>
        <dbReference type="EC" id="1.1.1.38"/>
    </reaction>
</comment>
<comment type="cofactor">
    <cofactor evidence="1">
        <name>Mg(2+)</name>
        <dbReference type="ChEBI" id="CHEBI:18420"/>
    </cofactor>
    <cofactor evidence="1">
        <name>Mn(2+)</name>
        <dbReference type="ChEBI" id="CHEBI:29035"/>
    </cofactor>
    <text evidence="1">Divalent metal cations. Prefers magnesium or manganese.</text>
</comment>
<comment type="subunit">
    <text evidence="1">Homotetramer.</text>
</comment>
<comment type="similarity">
    <text evidence="1">Belongs to the malic enzymes family.</text>
</comment>